<evidence type="ECO:0000255" key="1">
    <source>
        <dbReference type="HAMAP-Rule" id="MF_00061"/>
    </source>
</evidence>
<organism>
    <name type="scientific">Burkholderia mallei (strain NCTC 10247)</name>
    <dbReference type="NCBI Taxonomy" id="320389"/>
    <lineage>
        <taxon>Bacteria</taxon>
        <taxon>Pseudomonadati</taxon>
        <taxon>Pseudomonadota</taxon>
        <taxon>Betaproteobacteria</taxon>
        <taxon>Burkholderiales</taxon>
        <taxon>Burkholderiaceae</taxon>
        <taxon>Burkholderia</taxon>
        <taxon>pseudomallei group</taxon>
    </lineage>
</organism>
<comment type="function">
    <text evidence="1">Catalyzes the phosphorylation of the position 2 hydroxy group of 4-diphosphocytidyl-2C-methyl-D-erythritol.</text>
</comment>
<comment type="catalytic activity">
    <reaction evidence="1">
        <text>4-CDP-2-C-methyl-D-erythritol + ATP = 4-CDP-2-C-methyl-D-erythritol 2-phosphate + ADP + H(+)</text>
        <dbReference type="Rhea" id="RHEA:18437"/>
        <dbReference type="ChEBI" id="CHEBI:15378"/>
        <dbReference type="ChEBI" id="CHEBI:30616"/>
        <dbReference type="ChEBI" id="CHEBI:57823"/>
        <dbReference type="ChEBI" id="CHEBI:57919"/>
        <dbReference type="ChEBI" id="CHEBI:456216"/>
        <dbReference type="EC" id="2.7.1.148"/>
    </reaction>
</comment>
<comment type="pathway">
    <text evidence="1">Isoprenoid biosynthesis; isopentenyl diphosphate biosynthesis via DXP pathway; isopentenyl diphosphate from 1-deoxy-D-xylulose 5-phosphate: step 3/6.</text>
</comment>
<comment type="similarity">
    <text evidence="1">Belongs to the GHMP kinase family. IspE subfamily.</text>
</comment>
<dbReference type="EC" id="2.7.1.148" evidence="1"/>
<dbReference type="EMBL" id="CP000548">
    <property type="protein sequence ID" value="ABO05693.1"/>
    <property type="molecule type" value="Genomic_DNA"/>
</dbReference>
<dbReference type="RefSeq" id="WP_004195241.1">
    <property type="nucleotide sequence ID" value="NZ_CP007802.1"/>
</dbReference>
<dbReference type="SMR" id="A3MQB6"/>
<dbReference type="GeneID" id="93059044"/>
<dbReference type="KEGG" id="bmaz:BM44_414"/>
<dbReference type="KEGG" id="bmn:BMA10247_2932"/>
<dbReference type="PATRIC" id="fig|320389.8.peg.456"/>
<dbReference type="UniPathway" id="UPA00056">
    <property type="reaction ID" value="UER00094"/>
</dbReference>
<dbReference type="GO" id="GO:0050515">
    <property type="term" value="F:4-(cytidine 5'-diphospho)-2-C-methyl-D-erythritol kinase activity"/>
    <property type="evidence" value="ECO:0007669"/>
    <property type="project" value="UniProtKB-UniRule"/>
</dbReference>
<dbReference type="GO" id="GO:0005524">
    <property type="term" value="F:ATP binding"/>
    <property type="evidence" value="ECO:0007669"/>
    <property type="project" value="UniProtKB-UniRule"/>
</dbReference>
<dbReference type="GO" id="GO:0019288">
    <property type="term" value="P:isopentenyl diphosphate biosynthetic process, methylerythritol 4-phosphate pathway"/>
    <property type="evidence" value="ECO:0007669"/>
    <property type="project" value="UniProtKB-UniRule"/>
</dbReference>
<dbReference type="GO" id="GO:0016114">
    <property type="term" value="P:terpenoid biosynthetic process"/>
    <property type="evidence" value="ECO:0007669"/>
    <property type="project" value="InterPro"/>
</dbReference>
<dbReference type="Gene3D" id="3.30.230.10">
    <property type="match status" value="1"/>
</dbReference>
<dbReference type="Gene3D" id="3.30.70.890">
    <property type="entry name" value="GHMP kinase, C-terminal domain"/>
    <property type="match status" value="1"/>
</dbReference>
<dbReference type="HAMAP" id="MF_00061">
    <property type="entry name" value="IspE"/>
    <property type="match status" value="1"/>
</dbReference>
<dbReference type="InterPro" id="IPR013750">
    <property type="entry name" value="GHMP_kinase_C_dom"/>
</dbReference>
<dbReference type="InterPro" id="IPR036554">
    <property type="entry name" value="GHMP_kinase_C_sf"/>
</dbReference>
<dbReference type="InterPro" id="IPR006204">
    <property type="entry name" value="GHMP_kinase_N_dom"/>
</dbReference>
<dbReference type="InterPro" id="IPR004424">
    <property type="entry name" value="IspE"/>
</dbReference>
<dbReference type="InterPro" id="IPR020568">
    <property type="entry name" value="Ribosomal_Su5_D2-typ_SF"/>
</dbReference>
<dbReference type="InterPro" id="IPR014721">
    <property type="entry name" value="Ribsml_uS5_D2-typ_fold_subgr"/>
</dbReference>
<dbReference type="NCBIfam" id="TIGR00154">
    <property type="entry name" value="ispE"/>
    <property type="match status" value="1"/>
</dbReference>
<dbReference type="NCBIfam" id="NF011202">
    <property type="entry name" value="PRK14608.1"/>
    <property type="match status" value="1"/>
</dbReference>
<dbReference type="PANTHER" id="PTHR43527">
    <property type="entry name" value="4-DIPHOSPHOCYTIDYL-2-C-METHYL-D-ERYTHRITOL KINASE, CHLOROPLASTIC"/>
    <property type="match status" value="1"/>
</dbReference>
<dbReference type="PANTHER" id="PTHR43527:SF2">
    <property type="entry name" value="4-DIPHOSPHOCYTIDYL-2-C-METHYL-D-ERYTHRITOL KINASE, CHLOROPLASTIC"/>
    <property type="match status" value="1"/>
</dbReference>
<dbReference type="Pfam" id="PF08544">
    <property type="entry name" value="GHMP_kinases_C"/>
    <property type="match status" value="1"/>
</dbReference>
<dbReference type="Pfam" id="PF00288">
    <property type="entry name" value="GHMP_kinases_N"/>
    <property type="match status" value="1"/>
</dbReference>
<dbReference type="PIRSF" id="PIRSF010376">
    <property type="entry name" value="IspE"/>
    <property type="match status" value="1"/>
</dbReference>
<dbReference type="SUPFAM" id="SSF55060">
    <property type="entry name" value="GHMP Kinase, C-terminal domain"/>
    <property type="match status" value="1"/>
</dbReference>
<dbReference type="SUPFAM" id="SSF54211">
    <property type="entry name" value="Ribosomal protein S5 domain 2-like"/>
    <property type="match status" value="1"/>
</dbReference>
<proteinExistence type="inferred from homology"/>
<gene>
    <name evidence="1" type="primary">ispE</name>
    <name type="ordered locus">BMA10247_2932</name>
</gene>
<feature type="chain" id="PRO_1000007820" description="4-diphosphocytidyl-2-C-methyl-D-erythritol kinase">
    <location>
        <begin position="1"/>
        <end position="293"/>
    </location>
</feature>
<feature type="active site" evidence="1">
    <location>
        <position position="16"/>
    </location>
</feature>
<feature type="active site" evidence="1">
    <location>
        <position position="141"/>
    </location>
</feature>
<feature type="binding site" evidence="1">
    <location>
        <begin position="99"/>
        <end position="109"/>
    </location>
    <ligand>
        <name>ATP</name>
        <dbReference type="ChEBI" id="CHEBI:30616"/>
    </ligand>
</feature>
<protein>
    <recommendedName>
        <fullName evidence="1">4-diphosphocytidyl-2-C-methyl-D-erythritol kinase</fullName>
        <shortName evidence="1">CMK</shortName>
        <ecNumber evidence="1">2.7.1.148</ecNumber>
    </recommendedName>
    <alternativeName>
        <fullName evidence="1">4-(cytidine-5'-diphospho)-2-C-methyl-D-erythritol kinase</fullName>
    </alternativeName>
</protein>
<accession>A3MQB6</accession>
<keyword id="KW-0067">ATP-binding</keyword>
<keyword id="KW-0414">Isoprene biosynthesis</keyword>
<keyword id="KW-0418">Kinase</keyword>
<keyword id="KW-0547">Nucleotide-binding</keyword>
<keyword id="KW-0808">Transferase</keyword>
<name>ISPE_BURM7</name>
<reference key="1">
    <citation type="journal article" date="2010" name="Genome Biol. Evol.">
        <title>Continuing evolution of Burkholderia mallei through genome reduction and large-scale rearrangements.</title>
        <authorList>
            <person name="Losada L."/>
            <person name="Ronning C.M."/>
            <person name="DeShazer D."/>
            <person name="Woods D."/>
            <person name="Fedorova N."/>
            <person name="Kim H.S."/>
            <person name="Shabalina S.A."/>
            <person name="Pearson T.R."/>
            <person name="Brinkac L."/>
            <person name="Tan P."/>
            <person name="Nandi T."/>
            <person name="Crabtree J."/>
            <person name="Badger J."/>
            <person name="Beckstrom-Sternberg S."/>
            <person name="Saqib M."/>
            <person name="Schutzer S.E."/>
            <person name="Keim P."/>
            <person name="Nierman W.C."/>
        </authorList>
    </citation>
    <scope>NUCLEOTIDE SEQUENCE [LARGE SCALE GENOMIC DNA]</scope>
    <source>
        <strain>NCTC 10247</strain>
    </source>
</reference>
<sequence>MTDTTRSLRDCLAPAKLNLFLHITGRRPDGYHALQSVFQLLDWGDRLHFTLRDDGKVSRVTDVPGVPEESDLVVRAASLLKAHAGATLGVDIEIDKRLPMGAGLGGGSSDAATTLLALNRLWRLDLPRTTLQSLAVKLGADVPFFVFGKNAFAEGIGEALQAVELPARWFLVVTPRVHVPTAAIFSEKSLTRDSKPITITDFLAQRGIDAGWPDSFGRNDMQPVVTSKYAEVAKVVEWFYNLTPARMTGSGASVFAAFKSKADAEAAQAKLPAGWNSAVAESMSEHPLFAFAS</sequence>